<dbReference type="EC" id="2.7.7.8" evidence="1"/>
<dbReference type="EMBL" id="BA000036">
    <property type="protein sequence ID" value="BAB99368.1"/>
    <property type="molecule type" value="Genomic_DNA"/>
</dbReference>
<dbReference type="EMBL" id="BX927153">
    <property type="protein sequence ID" value="CAF20316.1"/>
    <property type="molecule type" value="Genomic_DNA"/>
</dbReference>
<dbReference type="RefSeq" id="NP_601181.1">
    <property type="nucleotide sequence ID" value="NC_003450.3"/>
</dbReference>
<dbReference type="RefSeq" id="WP_011014796.1">
    <property type="nucleotide sequence ID" value="NC_006958.1"/>
</dbReference>
<dbReference type="SMR" id="Q8NP50"/>
<dbReference type="STRING" id="196627.cg2166"/>
<dbReference type="KEGG" id="cgb:cg2166"/>
<dbReference type="KEGG" id="cgl:Cgl1975"/>
<dbReference type="PATRIC" id="fig|196627.13.peg.1912"/>
<dbReference type="eggNOG" id="COG1185">
    <property type="taxonomic scope" value="Bacteria"/>
</dbReference>
<dbReference type="HOGENOM" id="CLU_004217_2_2_11"/>
<dbReference type="OrthoDB" id="9804305at2"/>
<dbReference type="BioCyc" id="CORYNE:G18NG-11567-MONOMER"/>
<dbReference type="BRENDA" id="2.7.7.8">
    <property type="organism ID" value="960"/>
</dbReference>
<dbReference type="Proteomes" id="UP000000582">
    <property type="component" value="Chromosome"/>
</dbReference>
<dbReference type="Proteomes" id="UP000001009">
    <property type="component" value="Chromosome"/>
</dbReference>
<dbReference type="GO" id="GO:0005829">
    <property type="term" value="C:cytosol"/>
    <property type="evidence" value="ECO:0007669"/>
    <property type="project" value="TreeGrafter"/>
</dbReference>
<dbReference type="GO" id="GO:0000175">
    <property type="term" value="F:3'-5'-RNA exonuclease activity"/>
    <property type="evidence" value="ECO:0007669"/>
    <property type="project" value="TreeGrafter"/>
</dbReference>
<dbReference type="GO" id="GO:0000287">
    <property type="term" value="F:magnesium ion binding"/>
    <property type="evidence" value="ECO:0007669"/>
    <property type="project" value="UniProtKB-UniRule"/>
</dbReference>
<dbReference type="GO" id="GO:0004654">
    <property type="term" value="F:polyribonucleotide nucleotidyltransferase activity"/>
    <property type="evidence" value="ECO:0007669"/>
    <property type="project" value="UniProtKB-UniRule"/>
</dbReference>
<dbReference type="GO" id="GO:0003723">
    <property type="term" value="F:RNA binding"/>
    <property type="evidence" value="ECO:0007669"/>
    <property type="project" value="UniProtKB-UniRule"/>
</dbReference>
<dbReference type="GO" id="GO:0006402">
    <property type="term" value="P:mRNA catabolic process"/>
    <property type="evidence" value="ECO:0007669"/>
    <property type="project" value="UniProtKB-UniRule"/>
</dbReference>
<dbReference type="GO" id="GO:0006396">
    <property type="term" value="P:RNA processing"/>
    <property type="evidence" value="ECO:0007669"/>
    <property type="project" value="InterPro"/>
</dbReference>
<dbReference type="CDD" id="cd02393">
    <property type="entry name" value="KH-I_PNPase"/>
    <property type="match status" value="1"/>
</dbReference>
<dbReference type="CDD" id="cd11364">
    <property type="entry name" value="RNase_PH_PNPase_2"/>
    <property type="match status" value="1"/>
</dbReference>
<dbReference type="FunFam" id="2.40.50.140:FF:000069">
    <property type="entry name" value="Polyribonucleotide nucleotidyltransferase"/>
    <property type="match status" value="1"/>
</dbReference>
<dbReference type="FunFam" id="3.30.1370.10:FF:000001">
    <property type="entry name" value="Polyribonucleotide nucleotidyltransferase"/>
    <property type="match status" value="1"/>
</dbReference>
<dbReference type="FunFam" id="3.30.230.70:FF:000001">
    <property type="entry name" value="Polyribonucleotide nucleotidyltransferase"/>
    <property type="match status" value="1"/>
</dbReference>
<dbReference type="FunFam" id="3.30.230.70:FF:000002">
    <property type="entry name" value="Polyribonucleotide nucleotidyltransferase"/>
    <property type="match status" value="1"/>
</dbReference>
<dbReference type="Gene3D" id="3.30.230.70">
    <property type="entry name" value="GHMP Kinase, N-terminal domain"/>
    <property type="match status" value="2"/>
</dbReference>
<dbReference type="Gene3D" id="3.30.1370.10">
    <property type="entry name" value="K Homology domain, type 1"/>
    <property type="match status" value="1"/>
</dbReference>
<dbReference type="Gene3D" id="2.40.50.140">
    <property type="entry name" value="Nucleic acid-binding proteins"/>
    <property type="match status" value="1"/>
</dbReference>
<dbReference type="HAMAP" id="MF_01595">
    <property type="entry name" value="PNPase"/>
    <property type="match status" value="1"/>
</dbReference>
<dbReference type="InterPro" id="IPR001247">
    <property type="entry name" value="ExoRNase_PH_dom1"/>
</dbReference>
<dbReference type="InterPro" id="IPR036345">
    <property type="entry name" value="ExoRNase_PH_dom2_sf"/>
</dbReference>
<dbReference type="InterPro" id="IPR014069">
    <property type="entry name" value="GPSI/PNP"/>
</dbReference>
<dbReference type="InterPro" id="IPR004087">
    <property type="entry name" value="KH_dom"/>
</dbReference>
<dbReference type="InterPro" id="IPR004088">
    <property type="entry name" value="KH_dom_type_1"/>
</dbReference>
<dbReference type="InterPro" id="IPR036612">
    <property type="entry name" value="KH_dom_type_1_sf"/>
</dbReference>
<dbReference type="InterPro" id="IPR012340">
    <property type="entry name" value="NA-bd_OB-fold"/>
</dbReference>
<dbReference type="InterPro" id="IPR012162">
    <property type="entry name" value="PNPase"/>
</dbReference>
<dbReference type="InterPro" id="IPR027408">
    <property type="entry name" value="PNPase/RNase_PH_dom_sf"/>
</dbReference>
<dbReference type="InterPro" id="IPR015848">
    <property type="entry name" value="PNPase_PH_RNA-bd_bac/org-type"/>
</dbReference>
<dbReference type="InterPro" id="IPR036456">
    <property type="entry name" value="PNPase_PH_RNA-bd_sf"/>
</dbReference>
<dbReference type="InterPro" id="IPR020568">
    <property type="entry name" value="Ribosomal_Su5_D2-typ_SF"/>
</dbReference>
<dbReference type="InterPro" id="IPR003029">
    <property type="entry name" value="S1_domain"/>
</dbReference>
<dbReference type="NCBIfam" id="TIGR03591">
    <property type="entry name" value="polynuc_phos"/>
    <property type="match status" value="1"/>
</dbReference>
<dbReference type="NCBIfam" id="TIGR02696">
    <property type="entry name" value="pppGpp_PNP"/>
    <property type="match status" value="1"/>
</dbReference>
<dbReference type="NCBIfam" id="NF008805">
    <property type="entry name" value="PRK11824.1"/>
    <property type="match status" value="1"/>
</dbReference>
<dbReference type="PANTHER" id="PTHR11252">
    <property type="entry name" value="POLYRIBONUCLEOTIDE NUCLEOTIDYLTRANSFERASE"/>
    <property type="match status" value="1"/>
</dbReference>
<dbReference type="PANTHER" id="PTHR11252:SF0">
    <property type="entry name" value="POLYRIBONUCLEOTIDE NUCLEOTIDYLTRANSFERASE 1, MITOCHONDRIAL"/>
    <property type="match status" value="1"/>
</dbReference>
<dbReference type="Pfam" id="PF00013">
    <property type="entry name" value="KH_1"/>
    <property type="match status" value="1"/>
</dbReference>
<dbReference type="Pfam" id="PF03726">
    <property type="entry name" value="PNPase"/>
    <property type="match status" value="1"/>
</dbReference>
<dbReference type="Pfam" id="PF01138">
    <property type="entry name" value="RNase_PH"/>
    <property type="match status" value="2"/>
</dbReference>
<dbReference type="Pfam" id="PF00575">
    <property type="entry name" value="S1"/>
    <property type="match status" value="1"/>
</dbReference>
<dbReference type="PIRSF" id="PIRSF005499">
    <property type="entry name" value="PNPase"/>
    <property type="match status" value="1"/>
</dbReference>
<dbReference type="SMART" id="SM00322">
    <property type="entry name" value="KH"/>
    <property type="match status" value="1"/>
</dbReference>
<dbReference type="SMART" id="SM00316">
    <property type="entry name" value="S1"/>
    <property type="match status" value="1"/>
</dbReference>
<dbReference type="SUPFAM" id="SSF54791">
    <property type="entry name" value="Eukaryotic type KH-domain (KH-domain type I)"/>
    <property type="match status" value="1"/>
</dbReference>
<dbReference type="SUPFAM" id="SSF50249">
    <property type="entry name" value="Nucleic acid-binding proteins"/>
    <property type="match status" value="1"/>
</dbReference>
<dbReference type="SUPFAM" id="SSF46915">
    <property type="entry name" value="Polynucleotide phosphorylase/guanosine pentaphosphate synthase (PNPase/GPSI), domain 3"/>
    <property type="match status" value="1"/>
</dbReference>
<dbReference type="SUPFAM" id="SSF55666">
    <property type="entry name" value="Ribonuclease PH domain 2-like"/>
    <property type="match status" value="2"/>
</dbReference>
<dbReference type="SUPFAM" id="SSF54211">
    <property type="entry name" value="Ribosomal protein S5 domain 2-like"/>
    <property type="match status" value="2"/>
</dbReference>
<dbReference type="PROSITE" id="PS50084">
    <property type="entry name" value="KH_TYPE_1"/>
    <property type="match status" value="1"/>
</dbReference>
<dbReference type="PROSITE" id="PS50126">
    <property type="entry name" value="S1"/>
    <property type="match status" value="1"/>
</dbReference>
<name>PNP_CORGL</name>
<evidence type="ECO:0000255" key="1">
    <source>
        <dbReference type="HAMAP-Rule" id="MF_01595"/>
    </source>
</evidence>
<sequence>MSDVKYFEDTEFGLIEAVATIDNGDFGTRTIRFETGQLARQADGAVTTYLDDDTMLLATTTASNQPREGFDFFPLTVDVEERMYAAGRIPGSFFRREGRPSTEAILACRLIDRPLRPTFVKGLRNEVQIVVTVMSMNPEDYYDVVAINGASAATRISGLPVSGAVGGVRMALVVDEKHPEGQWVAFPTHAQHEQSVFEIVVAGRLVERKRGNKTFSDVAVMMVEAGASENVVNRVKDGAPAPTEKIVSDGLEAAKPFIDILCRAQEGLAQRVGNAAKEFPLFPPYTDEVYSAVERKVSKKLASLLTLKAKQERDDATNAYMEEIEAELLPKFEASYSSAAEASKEIRAGYNAVMKAIVRRMILTDHFRIDGRGVTDIRDLAVEVELIPRAHGSSLFERGETQILGVTTLDMLKMEQQIDSLAPGDAKRYMHHYNFPPYSTGETGRVGSPKRREIGHGALAERAVLPVIPSREEFPYAIRQVSEALGSNGSTSMGSVCASTLSLYNAGVPLKAPVAGIAMGLVSGEIDGKTEYVALTDILGAEDAFGDMDFKVAGTADFITALQLDTKLDGIPSKVLSDALEQARDARLTILNTMADVINGPDEMSKFAPRITTVKIPVAKIGELIGPKGKNINALTEETGANISIEDDGTVFISAADGASAEAAIEKINALANPQLPKVGERFLGTVVKTTAFGAFVSLLPGRDGLVHISKLGNGKRVEKVDDVVKVGEKIQVEIADIDNRGKISLVPVVEED</sequence>
<reference key="1">
    <citation type="journal article" date="2003" name="Appl. Microbiol. Biotechnol.">
        <title>The Corynebacterium glutamicum genome: features and impacts on biotechnological processes.</title>
        <authorList>
            <person name="Ikeda M."/>
            <person name="Nakagawa S."/>
        </authorList>
    </citation>
    <scope>NUCLEOTIDE SEQUENCE [LARGE SCALE GENOMIC DNA]</scope>
    <source>
        <strain>ATCC 13032 / DSM 20300 / JCM 1318 / BCRC 11384 / CCUG 27702 / LMG 3730 / NBRC 12168 / NCIMB 10025 / NRRL B-2784 / 534</strain>
    </source>
</reference>
<reference key="2">
    <citation type="journal article" date="2003" name="J. Biotechnol.">
        <title>The complete Corynebacterium glutamicum ATCC 13032 genome sequence and its impact on the production of L-aspartate-derived amino acids and vitamins.</title>
        <authorList>
            <person name="Kalinowski J."/>
            <person name="Bathe B."/>
            <person name="Bartels D."/>
            <person name="Bischoff N."/>
            <person name="Bott M."/>
            <person name="Burkovski A."/>
            <person name="Dusch N."/>
            <person name="Eggeling L."/>
            <person name="Eikmanns B.J."/>
            <person name="Gaigalat L."/>
            <person name="Goesmann A."/>
            <person name="Hartmann M."/>
            <person name="Huthmacher K."/>
            <person name="Kraemer R."/>
            <person name="Linke B."/>
            <person name="McHardy A.C."/>
            <person name="Meyer F."/>
            <person name="Moeckel B."/>
            <person name="Pfefferle W."/>
            <person name="Puehler A."/>
            <person name="Rey D.A."/>
            <person name="Rueckert C."/>
            <person name="Rupp O."/>
            <person name="Sahm H."/>
            <person name="Wendisch V.F."/>
            <person name="Wiegraebe I."/>
            <person name="Tauch A."/>
        </authorList>
    </citation>
    <scope>NUCLEOTIDE SEQUENCE [LARGE SCALE GENOMIC DNA]</scope>
    <source>
        <strain>ATCC 13032 / DSM 20300 / JCM 1318 / BCRC 11384 / CCUG 27702 / LMG 3730 / NBRC 12168 / NCIMB 10025 / NRRL B-2784 / 534</strain>
    </source>
</reference>
<comment type="function">
    <text evidence="1">Involved in mRNA degradation. Catalyzes the phosphorolysis of single-stranded polyribonucleotides processively in the 3'- to 5'-direction.</text>
</comment>
<comment type="catalytic activity">
    <reaction evidence="1">
        <text>RNA(n+1) + phosphate = RNA(n) + a ribonucleoside 5'-diphosphate</text>
        <dbReference type="Rhea" id="RHEA:22096"/>
        <dbReference type="Rhea" id="RHEA-COMP:14527"/>
        <dbReference type="Rhea" id="RHEA-COMP:17342"/>
        <dbReference type="ChEBI" id="CHEBI:43474"/>
        <dbReference type="ChEBI" id="CHEBI:57930"/>
        <dbReference type="ChEBI" id="CHEBI:140395"/>
        <dbReference type="EC" id="2.7.7.8"/>
    </reaction>
</comment>
<comment type="cofactor">
    <cofactor evidence="1">
        <name>Mg(2+)</name>
        <dbReference type="ChEBI" id="CHEBI:18420"/>
    </cofactor>
</comment>
<comment type="subcellular location">
    <subcellularLocation>
        <location evidence="1">Cytoplasm</location>
    </subcellularLocation>
</comment>
<comment type="similarity">
    <text evidence="1">Belongs to the polyribonucleotide nucleotidyltransferase family.</text>
</comment>
<accession>Q8NP50</accession>
<accession>Q6M462</accession>
<protein>
    <recommendedName>
        <fullName evidence="1">Polyribonucleotide nucleotidyltransferase</fullName>
        <ecNumber evidence="1">2.7.7.8</ecNumber>
    </recommendedName>
    <alternativeName>
        <fullName evidence="1">Polynucleotide phosphorylase</fullName>
        <shortName evidence="1">PNPase</shortName>
    </alternativeName>
</protein>
<proteinExistence type="inferred from homology"/>
<keyword id="KW-0963">Cytoplasm</keyword>
<keyword id="KW-0460">Magnesium</keyword>
<keyword id="KW-0479">Metal-binding</keyword>
<keyword id="KW-0548">Nucleotidyltransferase</keyword>
<keyword id="KW-1185">Reference proteome</keyword>
<keyword id="KW-0694">RNA-binding</keyword>
<keyword id="KW-0808">Transferase</keyword>
<organism>
    <name type="scientific">Corynebacterium glutamicum (strain ATCC 13032 / DSM 20300 / JCM 1318 / BCRC 11384 / CCUG 27702 / LMG 3730 / NBRC 12168 / NCIMB 10025 / NRRL B-2784 / 534)</name>
    <dbReference type="NCBI Taxonomy" id="196627"/>
    <lineage>
        <taxon>Bacteria</taxon>
        <taxon>Bacillati</taxon>
        <taxon>Actinomycetota</taxon>
        <taxon>Actinomycetes</taxon>
        <taxon>Mycobacteriales</taxon>
        <taxon>Corynebacteriaceae</taxon>
        <taxon>Corynebacterium</taxon>
    </lineage>
</organism>
<gene>
    <name evidence="1" type="primary">pnp</name>
    <name type="ordered locus">Cgl1975</name>
    <name type="ordered locus">cg2166</name>
</gene>
<feature type="chain" id="PRO_0000329609" description="Polyribonucleotide nucleotidyltransferase">
    <location>
        <begin position="1"/>
        <end position="753"/>
    </location>
</feature>
<feature type="domain" description="KH" evidence="1">
    <location>
        <begin position="609"/>
        <end position="668"/>
    </location>
</feature>
<feature type="domain" description="S1 motif" evidence="1">
    <location>
        <begin position="680"/>
        <end position="749"/>
    </location>
</feature>
<feature type="binding site" evidence="1">
    <location>
        <position position="543"/>
    </location>
    <ligand>
        <name>Mg(2+)</name>
        <dbReference type="ChEBI" id="CHEBI:18420"/>
    </ligand>
</feature>
<feature type="binding site" evidence="1">
    <location>
        <position position="549"/>
    </location>
    <ligand>
        <name>Mg(2+)</name>
        <dbReference type="ChEBI" id="CHEBI:18420"/>
    </ligand>
</feature>